<keyword id="KW-0106">Calcium</keyword>
<keyword id="KW-0903">Direct protein sequencing</keyword>
<keyword id="KW-1015">Disulfide bond</keyword>
<keyword id="KW-0430">Lectin</keyword>
<keyword id="KW-0479">Metal-binding</keyword>
<keyword id="KW-0732">Signal</keyword>
<name>ITLN_ONCMY</name>
<comment type="function">
    <text evidence="8">May be involved in innate immune surveillance. May specifically recognize carbohydrate chains of pathogens and bacterial components in a calcium-dependent manner. In vitro binds N-acetylglucosamine residues.</text>
</comment>
<comment type="tissue specificity">
    <text evidence="5">Expressed at high levels in caudal kidney, liver, and swim bladder. Also expressed in gill, spleen, intestine and head kidney. Not detected in heart.</text>
</comment>
<sequence>MKYCVLLIMIHLLLVELPQFPEALQGNVYAAAPVVAATDLRLRIRSSYIGRSCKEIRDRYNQHEDGLYYLSTASGTVYQTFCDMTTAGGGWTLVASVHENNVYGKCTMGDRWSSQQGSNPNWPDGDGNWANRATFGTAEGATSDDFKNPGYYDIVAEDISVWHVPNNSPMEHWNLGAILRYHTERSFLSIQGGNLHQLFKLYPVRYNAEASGNTGPVIPIVYDFGDKETTRELYGPNTRNQFEPGFITFRPINNELAAMAICSGVKPTTGGDTEHYCIGGGGHFPEGAPRQCGDFPAFDWNGYGTNTEWSASKQLTEAAVLLFYR</sequence>
<feature type="signal peptide" evidence="3">
    <location>
        <begin position="1"/>
        <end position="23"/>
    </location>
</feature>
<feature type="chain" id="PRO_0000433020" description="Intelectin" evidence="3">
    <location>
        <begin position="24"/>
        <end position="325"/>
    </location>
</feature>
<feature type="domain" description="Fibrinogen C-terminal" evidence="4">
    <location>
        <begin position="44"/>
        <end position="266"/>
    </location>
</feature>
<feature type="binding site" evidence="2">
    <location>
        <position position="98"/>
    </location>
    <ligand>
        <name>Ca(2+)</name>
        <dbReference type="ChEBI" id="CHEBI:29108"/>
        <label>1</label>
    </ligand>
</feature>
<feature type="binding site" evidence="2">
    <location>
        <position position="99"/>
    </location>
    <ligand>
        <name>Ca(2+)</name>
        <dbReference type="ChEBI" id="CHEBI:29108"/>
        <label>2</label>
    </ligand>
</feature>
<feature type="binding site" evidence="1">
    <location>
        <position position="101"/>
    </location>
    <ligand>
        <name>Ca(2+)</name>
        <dbReference type="ChEBI" id="CHEBI:29108"/>
        <label>2</label>
    </ligand>
</feature>
<feature type="binding site" evidence="2">
    <location>
        <position position="104"/>
    </location>
    <ligand>
        <name>Ca(2+)</name>
        <dbReference type="ChEBI" id="CHEBI:29108"/>
        <label>2</label>
    </ligand>
</feature>
<feature type="binding site" evidence="2">
    <location>
        <position position="109"/>
    </location>
    <ligand>
        <name>Ca(2+)</name>
        <dbReference type="ChEBI" id="CHEBI:29108"/>
        <label>1</label>
    </ligand>
</feature>
<feature type="binding site" evidence="2">
    <location>
        <position position="110"/>
    </location>
    <ligand>
        <name>Ca(2+)</name>
        <dbReference type="ChEBI" id="CHEBI:29108"/>
        <label>2</label>
    </ligand>
</feature>
<feature type="binding site" evidence="2">
    <location>
        <position position="145"/>
    </location>
    <ligand>
        <name>Ca(2+)</name>
        <dbReference type="ChEBI" id="CHEBI:29108"/>
        <label>1</label>
    </ligand>
</feature>
<feature type="binding site" evidence="2">
    <location>
        <begin position="274"/>
        <end position="275"/>
    </location>
    <ligand>
        <name>a carbohydrate</name>
        <dbReference type="ChEBI" id="CHEBI:16646"/>
    </ligand>
</feature>
<feature type="binding site" evidence="2">
    <location>
        <position position="274"/>
    </location>
    <ligand>
        <name>Ca(2+)</name>
        <dbReference type="ChEBI" id="CHEBI:29108"/>
        <label>3</label>
    </ligand>
</feature>
<feature type="binding site" evidence="2">
    <location>
        <position position="286"/>
    </location>
    <ligand>
        <name>a carbohydrate</name>
        <dbReference type="ChEBI" id="CHEBI:16646"/>
    </ligand>
</feature>
<feature type="binding site" evidence="2">
    <location>
        <position position="286"/>
    </location>
    <ligand>
        <name>Ca(2+)</name>
        <dbReference type="ChEBI" id="CHEBI:29108"/>
        <label>3</label>
    </ligand>
</feature>
<feature type="binding site" evidence="2">
    <location>
        <position position="294"/>
    </location>
    <ligand>
        <name>Ca(2+)</name>
        <dbReference type="ChEBI" id="CHEBI:29108"/>
        <label>1</label>
    </ligand>
</feature>
<feature type="disulfide bond" evidence="4">
    <location>
        <begin position="53"/>
        <end position="82"/>
    </location>
</feature>
<feature type="disulfide bond" evidence="2">
    <location>
        <begin position="106"/>
        <end position="292"/>
    </location>
</feature>
<feature type="disulfide bond" evidence="2">
    <location>
        <begin position="262"/>
        <end position="277"/>
    </location>
</feature>
<evidence type="ECO:0000250" key="1">
    <source>
        <dbReference type="UniProtKB" id="Q5PPM0"/>
    </source>
</evidence>
<evidence type="ECO:0000250" key="2">
    <source>
        <dbReference type="UniProtKB" id="Q8WWA0"/>
    </source>
</evidence>
<evidence type="ECO:0000255" key="3"/>
<evidence type="ECO:0000255" key="4">
    <source>
        <dbReference type="PROSITE-ProRule" id="PRU00739"/>
    </source>
</evidence>
<evidence type="ECO:0000269" key="5">
    <source>
    </source>
</evidence>
<evidence type="ECO:0000303" key="6">
    <source>
    </source>
</evidence>
<evidence type="ECO:0000305" key="7"/>
<evidence type="ECO:0000305" key="8">
    <source>
    </source>
</evidence>
<protein>
    <recommendedName>
        <fullName evidence="6">Intelectin</fullName>
        <shortName evidence="6">RTInt</shortName>
    </recommendedName>
</protein>
<dbReference type="SMR" id="P0DMV4"/>
<dbReference type="Proteomes" id="UP000694395">
    <property type="component" value="Unplaced"/>
</dbReference>
<dbReference type="GO" id="GO:0005737">
    <property type="term" value="C:cytoplasm"/>
    <property type="evidence" value="ECO:0000314"/>
    <property type="project" value="AgBase"/>
</dbReference>
<dbReference type="GO" id="GO:0005615">
    <property type="term" value="C:extracellular space"/>
    <property type="evidence" value="ECO:0000314"/>
    <property type="project" value="AgBase"/>
</dbReference>
<dbReference type="GO" id="GO:0008061">
    <property type="term" value="F:chitin binding"/>
    <property type="evidence" value="ECO:0000314"/>
    <property type="project" value="AgBase"/>
</dbReference>
<dbReference type="GO" id="GO:0005537">
    <property type="term" value="F:D-mannose binding"/>
    <property type="evidence" value="ECO:0000314"/>
    <property type="project" value="AgBase"/>
</dbReference>
<dbReference type="GO" id="GO:0001530">
    <property type="term" value="F:lipopolysaccharide binding"/>
    <property type="evidence" value="ECO:0000314"/>
    <property type="project" value="AgBase"/>
</dbReference>
<dbReference type="GO" id="GO:0046872">
    <property type="term" value="F:metal ion binding"/>
    <property type="evidence" value="ECO:0007669"/>
    <property type="project" value="UniProtKB-KW"/>
</dbReference>
<dbReference type="GO" id="GO:0070492">
    <property type="term" value="F:oligosaccharide binding"/>
    <property type="evidence" value="ECO:0007669"/>
    <property type="project" value="TreeGrafter"/>
</dbReference>
<dbReference type="FunFam" id="3.90.215.10:FF:000015">
    <property type="entry name" value="Intelectin 2"/>
    <property type="match status" value="1"/>
</dbReference>
<dbReference type="Gene3D" id="3.90.215.10">
    <property type="entry name" value="Gamma Fibrinogen, chain A, domain 1"/>
    <property type="match status" value="1"/>
</dbReference>
<dbReference type="InterPro" id="IPR036056">
    <property type="entry name" value="Fibrinogen-like_C"/>
</dbReference>
<dbReference type="InterPro" id="IPR014716">
    <property type="entry name" value="Fibrinogen_a/b/g_C_1"/>
</dbReference>
<dbReference type="InterPro" id="IPR002181">
    <property type="entry name" value="Fibrinogen_a/b/g_C_dom"/>
</dbReference>
<dbReference type="NCBIfam" id="NF040941">
    <property type="entry name" value="GGGWT_bact"/>
    <property type="match status" value="1"/>
</dbReference>
<dbReference type="PANTHER" id="PTHR16146">
    <property type="entry name" value="INTELECTIN"/>
    <property type="match status" value="1"/>
</dbReference>
<dbReference type="PANTHER" id="PTHR16146:SF46">
    <property type="entry name" value="INTELECTIN-1A-RELATED"/>
    <property type="match status" value="1"/>
</dbReference>
<dbReference type="SUPFAM" id="SSF56496">
    <property type="entry name" value="Fibrinogen C-terminal domain-like"/>
    <property type="match status" value="1"/>
</dbReference>
<dbReference type="PROSITE" id="PS51406">
    <property type="entry name" value="FIBRINOGEN_C_2"/>
    <property type="match status" value="1"/>
</dbReference>
<accession>P0DMV4</accession>
<reference key="1">
    <citation type="journal article" date="2008" name="Fish Shellfish Immunol.">
        <title>Identification, cloning and tissue localization of a rainbow trout (Oncorhynchus mykiss) intelectin-like protein that binds bacteria and chitin.</title>
        <authorList>
            <person name="Russell S."/>
            <person name="Young K.M."/>
            <person name="Smith M."/>
            <person name="Hayes M.A."/>
            <person name="Lumsden J.S."/>
        </authorList>
    </citation>
    <scope>NUCLEOTIDE SEQUENCE [MRNA]</scope>
    <scope>PROTEIN SEQUENCE OF 116-124; 145-152; 272-287 AND 318-325</scope>
    <scope>FUNCTION</scope>
    <scope>TISSUE SPECIFICITY</scope>
</reference>
<organism>
    <name type="scientific">Oncorhynchus mykiss</name>
    <name type="common">Rainbow trout</name>
    <name type="synonym">Salmo gairdneri</name>
    <dbReference type="NCBI Taxonomy" id="8022"/>
    <lineage>
        <taxon>Eukaryota</taxon>
        <taxon>Metazoa</taxon>
        <taxon>Chordata</taxon>
        <taxon>Craniata</taxon>
        <taxon>Vertebrata</taxon>
        <taxon>Euteleostomi</taxon>
        <taxon>Actinopterygii</taxon>
        <taxon>Neopterygii</taxon>
        <taxon>Teleostei</taxon>
        <taxon>Protacanthopterygii</taxon>
        <taxon>Salmoniformes</taxon>
        <taxon>Salmonidae</taxon>
        <taxon>Salmoninae</taxon>
        <taxon>Oncorhynchus</taxon>
    </lineage>
</organism>
<proteinExistence type="evidence at protein level"/>
<gene>
    <name evidence="7" type="primary">itln</name>
</gene>